<dbReference type="EMBL" id="CP000970">
    <property type="protein sequence ID" value="ACB19540.1"/>
    <property type="molecule type" value="Genomic_DNA"/>
</dbReference>
<dbReference type="RefSeq" id="WP_000063508.1">
    <property type="nucleotide sequence ID" value="NC_010498.1"/>
</dbReference>
<dbReference type="KEGG" id="ecm:EcSMS35_4298"/>
<dbReference type="HOGENOM" id="CLU_066437_0_0_6"/>
<dbReference type="Proteomes" id="UP000007011">
    <property type="component" value="Chromosome"/>
</dbReference>
<dbReference type="GO" id="GO:0005886">
    <property type="term" value="C:plasma membrane"/>
    <property type="evidence" value="ECO:0007669"/>
    <property type="project" value="UniProtKB-SubCell"/>
</dbReference>
<dbReference type="GO" id="GO:0015153">
    <property type="term" value="F:rhamnose transmembrane transporter activity"/>
    <property type="evidence" value="ECO:0007669"/>
    <property type="project" value="UniProtKB-UniRule"/>
</dbReference>
<dbReference type="GO" id="GO:0015293">
    <property type="term" value="F:symporter activity"/>
    <property type="evidence" value="ECO:0007669"/>
    <property type="project" value="UniProtKB-KW"/>
</dbReference>
<dbReference type="HAMAP" id="MF_01532">
    <property type="entry name" value="RhaT"/>
    <property type="match status" value="1"/>
</dbReference>
<dbReference type="InterPro" id="IPR004673">
    <property type="entry name" value="L-rhamnose-proton_sym_RhaT"/>
</dbReference>
<dbReference type="NCBIfam" id="NF010021">
    <property type="entry name" value="PRK13499.1-1"/>
    <property type="match status" value="1"/>
</dbReference>
<dbReference type="NCBIfam" id="NF010023">
    <property type="entry name" value="PRK13499.1-3"/>
    <property type="match status" value="1"/>
</dbReference>
<dbReference type="NCBIfam" id="TIGR00776">
    <property type="entry name" value="RhaT"/>
    <property type="match status" value="1"/>
</dbReference>
<dbReference type="Pfam" id="PF06379">
    <property type="entry name" value="RhaT"/>
    <property type="match status" value="1"/>
</dbReference>
<comment type="function">
    <text evidence="1">Uptake of L-rhamnose across the cytoplasmic membrane with the concomitant transport of protons into the cell (symport system).</text>
</comment>
<comment type="catalytic activity">
    <reaction evidence="1">
        <text>L-rhamnopyranose(in) + H(+)(in) = L-rhamnopyranose(out) + H(+)(out)</text>
        <dbReference type="Rhea" id="RHEA:29947"/>
        <dbReference type="ChEBI" id="CHEBI:15378"/>
        <dbReference type="ChEBI" id="CHEBI:62346"/>
    </reaction>
    <physiologicalReaction direction="right-to-left" evidence="1">
        <dbReference type="Rhea" id="RHEA:29949"/>
    </physiologicalReaction>
</comment>
<comment type="subcellular location">
    <subcellularLocation>
        <location evidence="1">Cell inner membrane</location>
        <topology evidence="1">Multi-pass membrane protein</topology>
    </subcellularLocation>
</comment>
<comment type="similarity">
    <text evidence="1">Belongs to the L-rhamnose transporter (TC 2.A.7.6) family.</text>
</comment>
<reference key="1">
    <citation type="journal article" date="2008" name="J. Bacteriol.">
        <title>Insights into the environmental resistance gene pool from the genome sequence of the multidrug-resistant environmental isolate Escherichia coli SMS-3-5.</title>
        <authorList>
            <person name="Fricke W.F."/>
            <person name="Wright M.S."/>
            <person name="Lindell A.H."/>
            <person name="Harkins D.M."/>
            <person name="Baker-Austin C."/>
            <person name="Ravel J."/>
            <person name="Stepanauskas R."/>
        </authorList>
    </citation>
    <scope>NUCLEOTIDE SEQUENCE [LARGE SCALE GENOMIC DNA]</scope>
    <source>
        <strain>SMS-3-5 / SECEC</strain>
    </source>
</reference>
<name>RHAT_ECOSM</name>
<keyword id="KW-0997">Cell inner membrane</keyword>
<keyword id="KW-1003">Cell membrane</keyword>
<keyword id="KW-0472">Membrane</keyword>
<keyword id="KW-0762">Sugar transport</keyword>
<keyword id="KW-0769">Symport</keyword>
<keyword id="KW-0812">Transmembrane</keyword>
<keyword id="KW-1133">Transmembrane helix</keyword>
<keyword id="KW-0813">Transport</keyword>
<evidence type="ECO:0000255" key="1">
    <source>
        <dbReference type="HAMAP-Rule" id="MF_01532"/>
    </source>
</evidence>
<protein>
    <recommendedName>
        <fullName evidence="1">L-rhamnose-proton symporter</fullName>
    </recommendedName>
    <alternativeName>
        <fullName evidence="1">L-rhamnose-H(+) transport protein</fullName>
    </alternativeName>
</protein>
<organism>
    <name type="scientific">Escherichia coli (strain SMS-3-5 / SECEC)</name>
    <dbReference type="NCBI Taxonomy" id="439855"/>
    <lineage>
        <taxon>Bacteria</taxon>
        <taxon>Pseudomonadati</taxon>
        <taxon>Pseudomonadota</taxon>
        <taxon>Gammaproteobacteria</taxon>
        <taxon>Enterobacterales</taxon>
        <taxon>Enterobacteriaceae</taxon>
        <taxon>Escherichia</taxon>
    </lineage>
</organism>
<gene>
    <name evidence="1" type="primary">rhaT</name>
    <name type="ordered locus">EcSMS35_4298</name>
</gene>
<proteinExistence type="inferred from homology"/>
<accession>B1LMU8</accession>
<sequence length="344" mass="37302">MSNAITMGIFWHLIGAASAACFYAPFKKVKKWSWETMWSVGGIVSWIILPWAISALLLPNFWAYYSSFSLSTLLPVFLFGAMWGIGNINYGLTMRYLGMSMGIGIAIGITLIVGTLMTPIINGNFDVLINTEGGRMTLLGVLVALIGVGIVTRAGQLKERKMGIKAEEFNLKKGLVLAVMCGIFSAGMSFAMNAAKPMHEAAAALGVDPLYVALPSYVVIMGGGAIINLGFCFIRLAKVKDLSLKADFSLAKPLIIHNVLLSALGGLMWYLQFFFYAWGHARIPAQYDYISWMLHMSFYVLCGGIVGLVLKEWNNAGRRPVTVLSLGCVVIIVAANIVGMGMAN</sequence>
<feature type="chain" id="PRO_1000193744" description="L-rhamnose-proton symporter">
    <location>
        <begin position="1"/>
        <end position="344"/>
    </location>
</feature>
<feature type="transmembrane region" description="Helical" evidence="1">
    <location>
        <begin position="4"/>
        <end position="24"/>
    </location>
</feature>
<feature type="transmembrane region" description="Helical" evidence="1">
    <location>
        <begin position="38"/>
        <end position="58"/>
    </location>
</feature>
<feature type="transmembrane region" description="Helical" evidence="1">
    <location>
        <begin position="68"/>
        <end position="88"/>
    </location>
</feature>
<feature type="transmembrane region" description="Helical" evidence="1">
    <location>
        <begin position="101"/>
        <end position="121"/>
    </location>
</feature>
<feature type="transmembrane region" description="Helical" evidence="1">
    <location>
        <begin position="137"/>
        <end position="157"/>
    </location>
</feature>
<feature type="transmembrane region" description="Helical" evidence="1">
    <location>
        <begin position="175"/>
        <end position="195"/>
    </location>
</feature>
<feature type="transmembrane region" description="Helical" evidence="1">
    <location>
        <begin position="214"/>
        <end position="234"/>
    </location>
</feature>
<feature type="transmembrane region" description="Helical" evidence="1">
    <location>
        <begin position="259"/>
        <end position="279"/>
    </location>
</feature>
<feature type="transmembrane region" description="Helical" evidence="1">
    <location>
        <begin position="290"/>
        <end position="310"/>
    </location>
</feature>
<feature type="transmembrane region" description="Helical" evidence="1">
    <location>
        <begin position="323"/>
        <end position="343"/>
    </location>
</feature>